<gene>
    <name evidence="1" type="primary">zapD</name>
    <name type="ordered locus">BWG_0096</name>
</gene>
<accession>C4ZRJ6</accession>
<dbReference type="EMBL" id="CP001396">
    <property type="protein sequence ID" value="ACR62265.1"/>
    <property type="molecule type" value="Genomic_DNA"/>
</dbReference>
<dbReference type="RefSeq" id="WP_001194734.1">
    <property type="nucleotide sequence ID" value="NC_012759.1"/>
</dbReference>
<dbReference type="SMR" id="C4ZRJ6"/>
<dbReference type="GeneID" id="93777333"/>
<dbReference type="KEGG" id="ebw:BWG_0096"/>
<dbReference type="HOGENOM" id="CLU_076303_0_0_6"/>
<dbReference type="GO" id="GO:0032153">
    <property type="term" value="C:cell division site"/>
    <property type="evidence" value="ECO:0007669"/>
    <property type="project" value="TreeGrafter"/>
</dbReference>
<dbReference type="GO" id="GO:0005737">
    <property type="term" value="C:cytoplasm"/>
    <property type="evidence" value="ECO:0007669"/>
    <property type="project" value="UniProtKB-SubCell"/>
</dbReference>
<dbReference type="GO" id="GO:0000917">
    <property type="term" value="P:division septum assembly"/>
    <property type="evidence" value="ECO:0007669"/>
    <property type="project" value="UniProtKB-KW"/>
</dbReference>
<dbReference type="GO" id="GO:0043093">
    <property type="term" value="P:FtsZ-dependent cytokinesis"/>
    <property type="evidence" value="ECO:0007669"/>
    <property type="project" value="UniProtKB-UniRule"/>
</dbReference>
<dbReference type="FunFam" id="1.10.3900.10:FF:000001">
    <property type="entry name" value="Cell division protein ZapD"/>
    <property type="match status" value="1"/>
</dbReference>
<dbReference type="FunFam" id="2.60.440.10:FF:000001">
    <property type="entry name" value="Cell division protein ZapD"/>
    <property type="match status" value="1"/>
</dbReference>
<dbReference type="Gene3D" id="1.10.3900.10">
    <property type="entry name" value="YacF-like"/>
    <property type="match status" value="1"/>
</dbReference>
<dbReference type="Gene3D" id="2.60.440.10">
    <property type="entry name" value="YacF-like domains"/>
    <property type="match status" value="1"/>
</dbReference>
<dbReference type="HAMAP" id="MF_01092">
    <property type="entry name" value="ZapD"/>
    <property type="match status" value="1"/>
</dbReference>
<dbReference type="InterPro" id="IPR009777">
    <property type="entry name" value="ZapD"/>
</dbReference>
<dbReference type="InterPro" id="IPR027462">
    <property type="entry name" value="ZapD_C"/>
</dbReference>
<dbReference type="InterPro" id="IPR036268">
    <property type="entry name" value="ZapD_sf"/>
</dbReference>
<dbReference type="NCBIfam" id="NF003653">
    <property type="entry name" value="PRK05287.1-1"/>
    <property type="match status" value="1"/>
</dbReference>
<dbReference type="NCBIfam" id="NF003655">
    <property type="entry name" value="PRK05287.1-3"/>
    <property type="match status" value="1"/>
</dbReference>
<dbReference type="PANTHER" id="PTHR39455">
    <property type="entry name" value="CELL DIVISION PROTEIN ZAPD"/>
    <property type="match status" value="1"/>
</dbReference>
<dbReference type="PANTHER" id="PTHR39455:SF1">
    <property type="entry name" value="CELL DIVISION PROTEIN ZAPD"/>
    <property type="match status" value="1"/>
</dbReference>
<dbReference type="Pfam" id="PF07072">
    <property type="entry name" value="ZapD"/>
    <property type="match status" value="1"/>
</dbReference>
<dbReference type="SUPFAM" id="SSF160950">
    <property type="entry name" value="YacF-like"/>
    <property type="match status" value="1"/>
</dbReference>
<name>ZAPD_ECOBW</name>
<feature type="chain" id="PRO_1000213539" description="Cell division protein ZapD">
    <location>
        <begin position="1"/>
        <end position="247"/>
    </location>
</feature>
<evidence type="ECO:0000255" key="1">
    <source>
        <dbReference type="HAMAP-Rule" id="MF_01092"/>
    </source>
</evidence>
<comment type="function">
    <text evidence="1">Cell division factor that enhances FtsZ-ring assembly. Directly interacts with FtsZ and promotes bundling of FtsZ protofilaments, with a reduction in FtsZ GTPase activity.</text>
</comment>
<comment type="subunit">
    <text evidence="1">Interacts with FtsZ.</text>
</comment>
<comment type="subcellular location">
    <subcellularLocation>
        <location evidence="1">Cytoplasm</location>
    </subcellularLocation>
    <text evidence="1">Localizes to mid-cell in an FtsZ-dependent manner.</text>
</comment>
<comment type="similarity">
    <text evidence="1">Belongs to the ZapD family.</text>
</comment>
<proteinExistence type="inferred from homology"/>
<reference key="1">
    <citation type="journal article" date="2009" name="J. Bacteriol.">
        <title>Genomic sequencing reveals regulatory mutations and recombinational events in the widely used MC4100 lineage of Escherichia coli K-12.</title>
        <authorList>
            <person name="Ferenci T."/>
            <person name="Zhou Z."/>
            <person name="Betteridge T."/>
            <person name="Ren Y."/>
            <person name="Liu Y."/>
            <person name="Feng L."/>
            <person name="Reeves P.R."/>
            <person name="Wang L."/>
        </authorList>
    </citation>
    <scope>NUCLEOTIDE SEQUENCE [LARGE SCALE GENOMIC DNA]</scope>
    <source>
        <strain>K12 / MC4100 / BW2952</strain>
    </source>
</reference>
<keyword id="KW-0131">Cell cycle</keyword>
<keyword id="KW-0132">Cell division</keyword>
<keyword id="KW-0963">Cytoplasm</keyword>
<keyword id="KW-0717">Septation</keyword>
<protein>
    <recommendedName>
        <fullName evidence="1">Cell division protein ZapD</fullName>
    </recommendedName>
    <alternativeName>
        <fullName evidence="1">Z ring-associated protein D</fullName>
    </alternativeName>
</protein>
<organism>
    <name type="scientific">Escherichia coli (strain K12 / MC4100 / BW2952)</name>
    <dbReference type="NCBI Taxonomy" id="595496"/>
    <lineage>
        <taxon>Bacteria</taxon>
        <taxon>Pseudomonadati</taxon>
        <taxon>Pseudomonadota</taxon>
        <taxon>Gammaproteobacteria</taxon>
        <taxon>Enterobacterales</taxon>
        <taxon>Enterobacteriaceae</taxon>
        <taxon>Escherichia</taxon>
    </lineage>
</organism>
<sequence>MQTQVLFEHPLNEKMRTWLRIEFLIQQLTVNLPIVDHAGALHFFRNVSELLDVFERGEVRTELLKELDRQQRKLQTWIGVPGVDQSRIEALIQQLKAAGSVLISAPRIGQFLREDRLIALVRQRLSIPGGCCSFDLPTLHIWLHLPQAQRDSQVETWIASLNPLTQALTMVLDLIRQSAPFRKQTSLNGFYQDNGGDADLLRLNLSLDSQLYPQISGHKSRFAIRFMPLDTENGQVPERLDFELACC</sequence>